<gene>
    <name evidence="1" type="primary">mch</name>
    <name type="ordered locus">Mhun_0444</name>
</gene>
<evidence type="ECO:0000255" key="1">
    <source>
        <dbReference type="HAMAP-Rule" id="MF_00486"/>
    </source>
</evidence>
<sequence>MISVNELALEIFDNLANYSEDFNVAYHELDNGAKIVDCGVSVPGGYAAGRAFTEICMGGLGEVNFRMGQIKHVPMPFIEVSTDYPAISCLGAQKAGWTVKAGNYFAMGSGPARALALKPKHTYEVIGYEDESDDAVIALESDHLPNGEVMEKIAKDCGIDVENLCAVVAPTASLVGSIQVCGRCVETAVYKLNELGFDTRKITAAMGTAPIPPVKADATKAMGTTNDATIYHGQISLTMKAPDIVDFLEKIPSNKSKGYGKPFYEIFKEANFDFYQIDTSLFSPAEVTINELTEGKVYHVGEVNPDVTLKSFGYL</sequence>
<proteinExistence type="inferred from homology"/>
<keyword id="KW-0963">Cytoplasm</keyword>
<keyword id="KW-0378">Hydrolase</keyword>
<keyword id="KW-0484">Methanogenesis</keyword>
<keyword id="KW-0554">One-carbon metabolism</keyword>
<keyword id="KW-1185">Reference proteome</keyword>
<organism>
    <name type="scientific">Methanospirillum hungatei JF-1 (strain ATCC 27890 / DSM 864 / NBRC 100397 / JF-1)</name>
    <dbReference type="NCBI Taxonomy" id="323259"/>
    <lineage>
        <taxon>Archaea</taxon>
        <taxon>Methanobacteriati</taxon>
        <taxon>Methanobacteriota</taxon>
        <taxon>Stenosarchaea group</taxon>
        <taxon>Methanomicrobia</taxon>
        <taxon>Methanomicrobiales</taxon>
        <taxon>Methanospirillaceae</taxon>
        <taxon>Methanospirillum</taxon>
    </lineage>
</organism>
<dbReference type="EC" id="3.5.4.27" evidence="1"/>
<dbReference type="EMBL" id="CP000254">
    <property type="protein sequence ID" value="ABD40206.1"/>
    <property type="molecule type" value="Genomic_DNA"/>
</dbReference>
<dbReference type="RefSeq" id="WP_011447494.1">
    <property type="nucleotide sequence ID" value="NC_007796.1"/>
</dbReference>
<dbReference type="SMR" id="Q2FR24"/>
<dbReference type="FunCoup" id="Q2FR24">
    <property type="interactions" value="66"/>
</dbReference>
<dbReference type="STRING" id="323259.Mhun_0444"/>
<dbReference type="EnsemblBacteria" id="ABD40206">
    <property type="protein sequence ID" value="ABD40206"/>
    <property type="gene ID" value="Mhun_0444"/>
</dbReference>
<dbReference type="GeneID" id="3925006"/>
<dbReference type="KEGG" id="mhu:Mhun_0444"/>
<dbReference type="eggNOG" id="arCOG02675">
    <property type="taxonomic scope" value="Archaea"/>
</dbReference>
<dbReference type="HOGENOM" id="CLU_876031_0_0_2"/>
<dbReference type="InParanoid" id="Q2FR24"/>
<dbReference type="OrthoDB" id="105468at2157"/>
<dbReference type="UniPathway" id="UPA00640">
    <property type="reaction ID" value="UER00694"/>
</dbReference>
<dbReference type="Proteomes" id="UP000001941">
    <property type="component" value="Chromosome"/>
</dbReference>
<dbReference type="GO" id="GO:0005737">
    <property type="term" value="C:cytoplasm"/>
    <property type="evidence" value="ECO:0007669"/>
    <property type="project" value="UniProtKB-SubCell"/>
</dbReference>
<dbReference type="GO" id="GO:0018759">
    <property type="term" value="F:methenyltetrahydromethanopterin cyclohydrolase activity"/>
    <property type="evidence" value="ECO:0007669"/>
    <property type="project" value="UniProtKB-UniRule"/>
</dbReference>
<dbReference type="GO" id="GO:0019386">
    <property type="term" value="P:methanogenesis, from carbon dioxide"/>
    <property type="evidence" value="ECO:0007669"/>
    <property type="project" value="UniProtKB-UniRule"/>
</dbReference>
<dbReference type="GO" id="GO:0006730">
    <property type="term" value="P:one-carbon metabolic process"/>
    <property type="evidence" value="ECO:0007669"/>
    <property type="project" value="UniProtKB-UniRule"/>
</dbReference>
<dbReference type="CDD" id="cd00545">
    <property type="entry name" value="MCH"/>
    <property type="match status" value="1"/>
</dbReference>
<dbReference type="Gene3D" id="3.10.340.11">
    <property type="entry name" value="Methenyltetrahydromethanopterin Cyclohydrolase, Chain A, domain 1"/>
    <property type="match status" value="1"/>
</dbReference>
<dbReference type="Gene3D" id="3.30.1030.10">
    <property type="entry name" value="Methenyltetrahydromethanopterin Cyclohydrolase, Chain A, domain 2"/>
    <property type="match status" value="1"/>
</dbReference>
<dbReference type="HAMAP" id="MF_00486">
    <property type="entry name" value="McH"/>
    <property type="match status" value="1"/>
</dbReference>
<dbReference type="InterPro" id="IPR003209">
    <property type="entry name" value="METHMP_CycHdrlase"/>
</dbReference>
<dbReference type="NCBIfam" id="TIGR03120">
    <property type="entry name" value="one_C_mch"/>
    <property type="match status" value="1"/>
</dbReference>
<dbReference type="Pfam" id="PF02289">
    <property type="entry name" value="MCH"/>
    <property type="match status" value="1"/>
</dbReference>
<dbReference type="SUPFAM" id="SSF56199">
    <property type="entry name" value="Methenyltetrahydromethanopterin cyclohydrolase"/>
    <property type="match status" value="1"/>
</dbReference>
<name>MCH_METHJ</name>
<reference key="1">
    <citation type="journal article" date="2016" name="Stand. Genomic Sci.">
        <title>Complete genome sequence of Methanospirillum hungatei type strain JF1.</title>
        <authorList>
            <person name="Gunsalus R.P."/>
            <person name="Cook L.E."/>
            <person name="Crable B."/>
            <person name="Rohlin L."/>
            <person name="McDonald E."/>
            <person name="Mouttaki H."/>
            <person name="Sieber J.R."/>
            <person name="Poweleit N."/>
            <person name="Zhou H."/>
            <person name="Lapidus A.L."/>
            <person name="Daligault H.E."/>
            <person name="Land M."/>
            <person name="Gilna P."/>
            <person name="Ivanova N."/>
            <person name="Kyrpides N."/>
            <person name="Culley D.E."/>
            <person name="McInerney M.J."/>
        </authorList>
    </citation>
    <scope>NUCLEOTIDE SEQUENCE [LARGE SCALE GENOMIC DNA]</scope>
    <source>
        <strain>ATCC 27890 / DSM 864 / NBRC 100397 / JF-1</strain>
    </source>
</reference>
<accession>Q2FR24</accession>
<protein>
    <recommendedName>
        <fullName evidence="1">Methenyltetrahydromethanopterin cyclohydrolase</fullName>
        <ecNumber evidence="1">3.5.4.27</ecNumber>
    </recommendedName>
    <alternativeName>
        <fullName evidence="1">Methenyl-H4MPT cyclohydrolase</fullName>
    </alternativeName>
</protein>
<feature type="chain" id="PRO_1000014398" description="Methenyltetrahydromethanopterin cyclohydrolase">
    <location>
        <begin position="1"/>
        <end position="315"/>
    </location>
</feature>
<comment type="function">
    <text evidence="1">Catalyzes the reversible interconversion of 5-formyl-H(4)MPT to methenyl-H(4)MPT(+).</text>
</comment>
<comment type="catalytic activity">
    <reaction evidence="1">
        <text>5,10-methenyl-5,6,7,8-tetrahydromethanopterin + H2O = N(5)-formyl-5,6,7,8-tetrahydromethanopterin + H(+)</text>
        <dbReference type="Rhea" id="RHEA:19053"/>
        <dbReference type="ChEBI" id="CHEBI:15377"/>
        <dbReference type="ChEBI" id="CHEBI:15378"/>
        <dbReference type="ChEBI" id="CHEBI:58018"/>
        <dbReference type="ChEBI" id="CHEBI:58337"/>
        <dbReference type="EC" id="3.5.4.27"/>
    </reaction>
</comment>
<comment type="pathway">
    <text evidence="1">One-carbon metabolism; methanogenesis from CO(2); 5,10-methenyl-5,6,7,8-tetrahydromethanopterin from CO(2): step 3/3.</text>
</comment>
<comment type="subcellular location">
    <subcellularLocation>
        <location evidence="1">Cytoplasm</location>
    </subcellularLocation>
</comment>
<comment type="similarity">
    <text evidence="1">Belongs to the MCH family.</text>
</comment>